<accession>Q9RGG3</accession>
<proteinExistence type="evidence at transcript level"/>
<gene>
    <name evidence="3" type="primary">sorC</name>
</gene>
<keyword id="KW-1003">Cell membrane</keyword>
<keyword id="KW-0472">Membrane</keyword>
<keyword id="KW-0598">Phosphotransferase system</keyword>
<keyword id="KW-0762">Sugar transport</keyword>
<keyword id="KW-0812">Transmembrane</keyword>
<keyword id="KW-1133">Transmembrane helix</keyword>
<keyword id="KW-0813">Transport</keyword>
<name>PTRC_LACCA</name>
<sequence length="277" mass="29002">MAISTIQIILIFIWSSVVGMGSVLDEFQTHRPLIACSIMGLILGDPKTGIILGGTLELIALGWMNIGAAQSPDSALASTISTILVIVGNQDIQKGIAIALPVAAAGQVLTVLARTVTVAFQHAADREAEKANFTAIIWLHFTALIVQALRVSIPTTIVAVFVSPEEIKSMLDALPEVITGGLAVAGGFIVVVGYAMILNMMSVKYLMPFFYQGFVLGGYLKLSLLAWGAVGLIFAIVYVQLNPKFATNHNNGTGGSGGTVAAAGDHPAALPEDELDD</sequence>
<reference key="1">
    <citation type="journal article" date="2000" name="J. Bacteriol.">
        <title>Genetics of L-sorbose transport and metabolism in Lactobacillus casei.</title>
        <authorList>
            <person name="Yebra M.J."/>
            <person name="Veyrat A."/>
            <person name="Santos M.A."/>
            <person name="Perez-Martinez G."/>
        </authorList>
    </citation>
    <scope>NUCLEOTIDE SEQUENCE [GENOMIC DNA]</scope>
    <scope>FUNCTION</scope>
    <scope>INDUCTION</scope>
    <source>
        <strain>ATCC 393 / DSM 20011 / JCM 1134 / BCRC 10697 / CCUG 21451 / NBRC 15883 / NCIMB 11970 / NCDO 161 / WDCM 00100</strain>
    </source>
</reference>
<feature type="chain" id="PRO_0000437532" description="PTS system sorbose-specific EIIC component">
    <location>
        <begin position="1"/>
        <end position="277"/>
    </location>
</feature>
<feature type="transmembrane region" description="Helical" evidence="1">
    <location>
        <begin position="1"/>
        <end position="21"/>
    </location>
</feature>
<feature type="transmembrane region" description="Helical" evidence="1">
    <location>
        <begin position="92"/>
        <end position="112"/>
    </location>
</feature>
<feature type="transmembrane region" description="Helical" evidence="1">
    <location>
        <begin position="133"/>
        <end position="153"/>
    </location>
</feature>
<feature type="transmembrane region" description="Helical" evidence="1">
    <location>
        <begin position="177"/>
        <end position="197"/>
    </location>
</feature>
<feature type="transmembrane region" description="Helical" evidence="1">
    <location>
        <begin position="219"/>
        <end position="239"/>
    </location>
</feature>
<feature type="domain" description="PTS EIIC type-4" evidence="1">
    <location>
        <begin position="3"/>
        <end position="237"/>
    </location>
</feature>
<dbReference type="EMBL" id="AF129168">
    <property type="protein sequence ID" value="AAF24133.1"/>
    <property type="molecule type" value="Genomic_DNA"/>
</dbReference>
<dbReference type="SMR" id="Q9RGG3"/>
<dbReference type="TCDB" id="4.A.6.1.26">
    <property type="family name" value="the pts mannose-fructose-sorbose (man) family"/>
</dbReference>
<dbReference type="eggNOG" id="COG3715">
    <property type="taxonomic scope" value="Bacteria"/>
</dbReference>
<dbReference type="BRENDA" id="2.7.1.206">
    <property type="organism ID" value="2854"/>
</dbReference>
<dbReference type="GO" id="GO:0005886">
    <property type="term" value="C:plasma membrane"/>
    <property type="evidence" value="ECO:0007669"/>
    <property type="project" value="UniProtKB-SubCell"/>
</dbReference>
<dbReference type="GO" id="GO:0009401">
    <property type="term" value="P:phosphoenolpyruvate-dependent sugar phosphotransferase system"/>
    <property type="evidence" value="ECO:0007669"/>
    <property type="project" value="UniProtKB-KW"/>
</dbReference>
<dbReference type="InterPro" id="IPR050303">
    <property type="entry name" value="GatZ_KbaZ_carbometab"/>
</dbReference>
<dbReference type="InterPro" id="IPR004700">
    <property type="entry name" value="PTS_IIC_man"/>
</dbReference>
<dbReference type="NCBIfam" id="TIGR00822">
    <property type="entry name" value="EII-Sor"/>
    <property type="match status" value="1"/>
</dbReference>
<dbReference type="NCBIfam" id="NF011647">
    <property type="entry name" value="PRK15065.1"/>
    <property type="match status" value="1"/>
</dbReference>
<dbReference type="PANTHER" id="PTHR32502">
    <property type="entry name" value="N-ACETYLGALACTOSAMINE PERMEASE II COMPONENT-RELATED"/>
    <property type="match status" value="1"/>
</dbReference>
<dbReference type="PANTHER" id="PTHR32502:SF4">
    <property type="entry name" value="PTS SYSTEM MANNOSE-SPECIFIC EIIC COMPONENT"/>
    <property type="match status" value="1"/>
</dbReference>
<dbReference type="Pfam" id="PF03609">
    <property type="entry name" value="EII-Sor"/>
    <property type="match status" value="1"/>
</dbReference>
<dbReference type="PROSITE" id="PS51106">
    <property type="entry name" value="PTS_EIIC_TYPE_4"/>
    <property type="match status" value="1"/>
</dbReference>
<comment type="function">
    <text evidence="2">The phosphoenolpyruvate-dependent sugar phosphotransferase system (PTS), a major carbohydrate active transport system, catalyzes the phosphorylation of incoming sugar substrates concomitant with their translocation across the cell membrane. The enzyme II SorABCD PTS system is involved in L-sorbose transport.</text>
</comment>
<comment type="subcellular location">
    <subcellularLocation>
        <location evidence="1">Cell membrane</location>
        <topology evidence="1">Multi-pass membrane protein</topology>
    </subcellularLocation>
</comment>
<comment type="induction">
    <text evidence="2">Induced by L-sorbose and repressed by D-glucose.</text>
</comment>
<comment type="domain">
    <text evidence="1">The EIIC type-4 domain forms the PTS system translocation channel and contains the specific substrate-binding site.</text>
</comment>
<protein>
    <recommendedName>
        <fullName evidence="3">PTS system sorbose-specific EIIC component</fullName>
    </recommendedName>
    <alternativeName>
        <fullName evidence="3">EIIC-Sor</fullName>
    </alternativeName>
    <alternativeName>
        <fullName evidence="3">Sorbose permease IIC component</fullName>
    </alternativeName>
</protein>
<evidence type="ECO:0000255" key="1">
    <source>
        <dbReference type="PROSITE-ProRule" id="PRU00429"/>
    </source>
</evidence>
<evidence type="ECO:0000269" key="2">
    <source>
    </source>
</evidence>
<evidence type="ECO:0000303" key="3">
    <source>
    </source>
</evidence>
<organism>
    <name type="scientific">Lacticaseibacillus casei</name>
    <name type="common">Lactobacillus casei</name>
    <dbReference type="NCBI Taxonomy" id="1582"/>
    <lineage>
        <taxon>Bacteria</taxon>
        <taxon>Bacillati</taxon>
        <taxon>Bacillota</taxon>
        <taxon>Bacilli</taxon>
        <taxon>Lactobacillales</taxon>
        <taxon>Lactobacillaceae</taxon>
        <taxon>Lacticaseibacillus</taxon>
    </lineage>
</organism>